<evidence type="ECO:0000305" key="1"/>
<evidence type="ECO:0007829" key="2">
    <source>
        <dbReference type="PDB" id="3A8G"/>
    </source>
</evidence>
<proteinExistence type="evidence at protein level"/>
<keyword id="KW-0002">3D-structure</keyword>
<keyword id="KW-0903">Direct protein sequencing</keyword>
<keyword id="KW-0456">Lyase</keyword>
<gene>
    <name type="primary">nthB</name>
    <name type="synonym">nha2</name>
</gene>
<name>NHAB_RHOER</name>
<protein>
    <recommendedName>
        <fullName>Nitrile hydratase subunit beta</fullName>
        <shortName>NHase</shortName>
        <shortName>Nitrilase</shortName>
        <ecNumber>4.2.1.84</ecNumber>
    </recommendedName>
</protein>
<reference key="1">
    <citation type="journal article" date="1989" name="Eur. J. Biochem.">
        <title>Primary structure of nitrile hydratase deduced from the nucleotide sequence of a Rhodococcus species and its expression in Escherichia coli.</title>
        <authorList>
            <person name="Ikehata O."/>
            <person name="Nishiyama M."/>
            <person name="Horinouchi S."/>
            <person name="Beppu T."/>
        </authorList>
    </citation>
    <scope>NUCLEOTIDE SEQUENCE [GENOMIC DNA]</scope>
    <scope>PARTIAL PROTEIN SEQUENCE</scope>
    <source>
        <strain>N-774</strain>
    </source>
</reference>
<reference key="2">
    <citation type="journal article" date="1991" name="Biochim. Biophys. Acta">
        <title>Cloning and characterization of an amidase gene from Rhodococcus species N-774 and its expression in Escherichia coli.</title>
        <authorList>
            <person name="Hashimoto Y."/>
            <person name="Nishiyama M."/>
            <person name="Ikehata O."/>
            <person name="Horinouchi S."/>
            <person name="Beppu T."/>
        </authorList>
    </citation>
    <scope>NUCLEOTIDE SEQUENCE [GENOMIC DNA]</scope>
    <source>
        <strain>N-774</strain>
    </source>
</reference>
<reference key="3">
    <citation type="submission" date="1995-03" db="EMBL/GenBank/DDBJ databases">
        <authorList>
            <person name="Bigey F."/>
            <person name="Chebrou H."/>
            <person name="Arnaud A."/>
            <person name="Galzy P."/>
        </authorList>
    </citation>
    <scope>NUCLEOTIDE SEQUENCE [GENOMIC DNA]</scope>
    <source>
        <strain>ACV2</strain>
    </source>
</reference>
<reference key="4">
    <citation type="journal article" date="1999" name="J. Biochem.">
        <title>Functional expression of nitrile hydratase in Escherichia coli: requirement of a nitrile hydratase activator and post-translational modification of a ligand cysteine.</title>
        <authorList>
            <person name="Nojiri M."/>
            <person name="Yohda M."/>
            <person name="Odaka M."/>
            <person name="Matsushita Y."/>
            <person name="Tsujimura M."/>
            <person name="Yoshida T."/>
            <person name="Dohmae N."/>
            <person name="Takio K."/>
            <person name="Endo I."/>
        </authorList>
    </citation>
    <scope>NUCLEOTIDE SEQUENCE [GENOMIC DNA]</scope>
    <source>
        <strain>N-771</strain>
    </source>
</reference>
<reference key="5">
    <citation type="journal article" date="1989" name="FEBS Lett.">
        <title>Nitrile hydratase of Rhodococcus sp. N-774. Purification and amino acid sequences.</title>
        <authorList>
            <person name="Endo T."/>
            <person name="Watanabe I."/>
        </authorList>
    </citation>
    <scope>PROTEIN SEQUENCE OF 1-19</scope>
    <source>
        <strain>N-774</strain>
    </source>
</reference>
<reference key="6">
    <citation type="journal article" date="1997" name="Structure">
        <title>Crystal structure of nitrile hydratase reveals a novel iron centre in a novel fold.</title>
        <authorList>
            <person name="Huang W."/>
            <person name="Jia J."/>
            <person name="Cummings J."/>
            <person name="Nelson M."/>
            <person name="Schneider G."/>
            <person name="Lindqvist Y."/>
        </authorList>
    </citation>
    <scope>X-RAY CRYSTALLOGRAPHY (2.65 ANGSTROMS)</scope>
    <source>
        <strain>Brevibacterium sp. R312</strain>
    </source>
</reference>
<reference key="7">
    <citation type="journal article" date="1998" name="Nat. Struct. Biol.">
        <title>Novel non-heme iron center of nitrile hydratase with a claw setting of oxygen atoms.</title>
        <authorList>
            <person name="Nagashima S."/>
            <person name="Nakasako M."/>
            <person name="Dohmae N."/>
            <person name="Tsujimura M."/>
            <person name="Takio K."/>
            <person name="Odaka M."/>
            <person name="Yohda M."/>
            <person name="Kamiya N."/>
            <person name="Endo I."/>
        </authorList>
    </citation>
    <scope>X-RAY CRYSTALLOGRAPHY (1.7 ANGSTROMS)</scope>
    <scope>IDENTIFICATION BY MASS SPECTROMETRY</scope>
</reference>
<comment type="function">
    <text>NHase catalyzes the hydration of various nitrile compounds to the corresponding amides.</text>
</comment>
<comment type="catalytic activity">
    <reaction>
        <text>an aliphatic primary amide = an aliphatic nitrile + H2O</text>
        <dbReference type="Rhea" id="RHEA:12673"/>
        <dbReference type="ChEBI" id="CHEBI:15377"/>
        <dbReference type="ChEBI" id="CHEBI:65285"/>
        <dbReference type="ChEBI" id="CHEBI:80291"/>
        <dbReference type="EC" id="4.2.1.84"/>
    </reaction>
</comment>
<comment type="subunit">
    <text>Heterodimer of an alpha and a beta chain.</text>
</comment>
<comment type="biotechnology">
    <text>Industrial production of acrylamide is now being developed using some of these enzymes.</text>
</comment>
<comment type="similarity">
    <text evidence="1">Belongs to the nitrile hydratase subunit beta family.</text>
</comment>
<sequence length="212" mass="23487">MDGVHDLAGVQGFGKVPHTVNADIGPTFHAEWEHLPYSLMFAGVAELGAFSVDEVRYVVERMEPRHYMMTPYYERYVIGVATLMVEKGILTQDELESLAGGPFPLSRPSESEGRPAPVETTTFEVGQRVRVRDEYVPGHIRMPAYCRGRVGTISHRTTEKWPFPDAIGHGRNDAGEEPTYHVKFAAEELFGSDTDGGSVVVDLFEGYLEPAA</sequence>
<dbReference type="EC" id="4.2.1.84"/>
<dbReference type="EMBL" id="X54074">
    <property type="protein sequence ID" value="CAA38011.1"/>
    <property type="molecule type" value="Genomic_DNA"/>
</dbReference>
<dbReference type="EMBL" id="X14668">
    <property type="protein sequence ID" value="CAA32798.1"/>
    <property type="molecule type" value="Genomic_DNA"/>
</dbReference>
<dbReference type="EMBL" id="Z48769">
    <property type="protein sequence ID" value="CAA88686.1"/>
    <property type="molecule type" value="Genomic_DNA"/>
</dbReference>
<dbReference type="EMBL" id="AB016078">
    <property type="protein sequence ID" value="BAA36598.1"/>
    <property type="molecule type" value="Genomic_DNA"/>
</dbReference>
<dbReference type="RefSeq" id="WP_124568478.1">
    <property type="nucleotide sequence ID" value="NZ_JAGGNL010000020.1"/>
</dbReference>
<dbReference type="PDB" id="1AHJ">
    <property type="method" value="X-ray"/>
    <property type="resolution" value="2.65 A"/>
    <property type="chains" value="B/D/F/H=1-212"/>
</dbReference>
<dbReference type="PDB" id="2AHJ">
    <property type="method" value="X-ray"/>
    <property type="resolution" value="1.70 A"/>
    <property type="chains" value="B/D=1-212"/>
</dbReference>
<dbReference type="PDB" id="2CYZ">
    <property type="method" value="X-ray"/>
    <property type="resolution" value="1.55 A"/>
    <property type="chains" value="B=1-212"/>
</dbReference>
<dbReference type="PDB" id="2CZ0">
    <property type="method" value="X-ray"/>
    <property type="resolution" value="1.50 A"/>
    <property type="chains" value="B=1-212"/>
</dbReference>
<dbReference type="PDB" id="2CZ1">
    <property type="method" value="X-ray"/>
    <property type="resolution" value="1.39 A"/>
    <property type="chains" value="B=1-212"/>
</dbReference>
<dbReference type="PDB" id="2CZ6">
    <property type="method" value="X-ray"/>
    <property type="resolution" value="1.50 A"/>
    <property type="chains" value="B=1-212"/>
</dbReference>
<dbReference type="PDB" id="2CZ7">
    <property type="method" value="X-ray"/>
    <property type="resolution" value="1.80 A"/>
    <property type="chains" value="B=1-212"/>
</dbReference>
<dbReference type="PDB" id="2D0Q">
    <property type="method" value="X-ray"/>
    <property type="resolution" value="1.65 A"/>
    <property type="chains" value="B=1-212"/>
</dbReference>
<dbReference type="PDB" id="2QDY">
    <property type="method" value="X-ray"/>
    <property type="resolution" value="1.30 A"/>
    <property type="chains" value="B=1-212"/>
</dbReference>
<dbReference type="PDB" id="2ZCF">
    <property type="method" value="X-ray"/>
    <property type="resolution" value="1.43 A"/>
    <property type="chains" value="B=1-212"/>
</dbReference>
<dbReference type="PDB" id="2ZPB">
    <property type="method" value="X-ray"/>
    <property type="resolution" value="1.30 A"/>
    <property type="chains" value="B=1-212"/>
</dbReference>
<dbReference type="PDB" id="2ZPE">
    <property type="method" value="X-ray"/>
    <property type="resolution" value="1.48 A"/>
    <property type="chains" value="B=1-212"/>
</dbReference>
<dbReference type="PDB" id="2ZPF">
    <property type="method" value="X-ray"/>
    <property type="resolution" value="1.48 A"/>
    <property type="chains" value="B=1-212"/>
</dbReference>
<dbReference type="PDB" id="2ZPG">
    <property type="method" value="X-ray"/>
    <property type="resolution" value="1.39 A"/>
    <property type="chains" value="B=1-212"/>
</dbReference>
<dbReference type="PDB" id="2ZPH">
    <property type="method" value="X-ray"/>
    <property type="resolution" value="1.59 A"/>
    <property type="chains" value="B=1-212"/>
</dbReference>
<dbReference type="PDB" id="2ZPI">
    <property type="method" value="X-ray"/>
    <property type="resolution" value="1.49 A"/>
    <property type="chains" value="B=1-212"/>
</dbReference>
<dbReference type="PDB" id="3A8G">
    <property type="method" value="X-ray"/>
    <property type="resolution" value="1.11 A"/>
    <property type="chains" value="B=1-212"/>
</dbReference>
<dbReference type="PDB" id="3A8H">
    <property type="method" value="X-ray"/>
    <property type="resolution" value="1.66 A"/>
    <property type="chains" value="B=1-212"/>
</dbReference>
<dbReference type="PDB" id="3A8L">
    <property type="method" value="X-ray"/>
    <property type="resolution" value="1.63 A"/>
    <property type="chains" value="B=1-212"/>
</dbReference>
<dbReference type="PDB" id="3A8M">
    <property type="method" value="X-ray"/>
    <property type="resolution" value="1.32 A"/>
    <property type="chains" value="B=1-212"/>
</dbReference>
<dbReference type="PDB" id="3A8O">
    <property type="method" value="X-ray"/>
    <property type="resolution" value="1.47 A"/>
    <property type="chains" value="B=1-212"/>
</dbReference>
<dbReference type="PDB" id="3WVD">
    <property type="method" value="X-ray"/>
    <property type="resolution" value="1.18 A"/>
    <property type="chains" value="B=1-212"/>
</dbReference>
<dbReference type="PDB" id="3WVE">
    <property type="method" value="X-ray"/>
    <property type="resolution" value="1.57 A"/>
    <property type="chains" value="B=1-212"/>
</dbReference>
<dbReference type="PDB" id="3X20">
    <property type="method" value="X-ray"/>
    <property type="resolution" value="1.18 A"/>
    <property type="chains" value="B=1-212"/>
</dbReference>
<dbReference type="PDB" id="3X24">
    <property type="method" value="X-ray"/>
    <property type="resolution" value="1.24 A"/>
    <property type="chains" value="B=1-212"/>
</dbReference>
<dbReference type="PDB" id="3X25">
    <property type="method" value="X-ray"/>
    <property type="resolution" value="1.20 A"/>
    <property type="chains" value="B=1-212"/>
</dbReference>
<dbReference type="PDB" id="3X26">
    <property type="method" value="X-ray"/>
    <property type="resolution" value="1.34 A"/>
    <property type="chains" value="B=1-212"/>
</dbReference>
<dbReference type="PDB" id="3X28">
    <property type="method" value="X-ray"/>
    <property type="resolution" value="1.65 A"/>
    <property type="chains" value="B=1-212"/>
</dbReference>
<dbReference type="PDBsum" id="1AHJ"/>
<dbReference type="PDBsum" id="2AHJ"/>
<dbReference type="PDBsum" id="2CYZ"/>
<dbReference type="PDBsum" id="2CZ0"/>
<dbReference type="PDBsum" id="2CZ1"/>
<dbReference type="PDBsum" id="2CZ6"/>
<dbReference type="PDBsum" id="2CZ7"/>
<dbReference type="PDBsum" id="2D0Q"/>
<dbReference type="PDBsum" id="2QDY"/>
<dbReference type="PDBsum" id="2ZCF"/>
<dbReference type="PDBsum" id="2ZPB"/>
<dbReference type="PDBsum" id="2ZPE"/>
<dbReference type="PDBsum" id="2ZPF"/>
<dbReference type="PDBsum" id="2ZPG"/>
<dbReference type="PDBsum" id="2ZPH"/>
<dbReference type="PDBsum" id="2ZPI"/>
<dbReference type="PDBsum" id="3A8G"/>
<dbReference type="PDBsum" id="3A8H"/>
<dbReference type="PDBsum" id="3A8L"/>
<dbReference type="PDBsum" id="3A8M"/>
<dbReference type="PDBsum" id="3A8O"/>
<dbReference type="PDBsum" id="3WVD"/>
<dbReference type="PDBsum" id="3WVE"/>
<dbReference type="PDBsum" id="3X20"/>
<dbReference type="PDBsum" id="3X24"/>
<dbReference type="PDBsum" id="3X25"/>
<dbReference type="PDBsum" id="3X26"/>
<dbReference type="PDBsum" id="3X28"/>
<dbReference type="SMR" id="P13449"/>
<dbReference type="DIP" id="DIP-6076N"/>
<dbReference type="IntAct" id="P13449">
    <property type="interactions" value="1"/>
</dbReference>
<dbReference type="STRING" id="1833.XU06_28850"/>
<dbReference type="SABIO-RK" id="P13449"/>
<dbReference type="EvolutionaryTrace" id="P13449"/>
<dbReference type="GO" id="GO:0018822">
    <property type="term" value="F:nitrile hydratase activity"/>
    <property type="evidence" value="ECO:0007669"/>
    <property type="project" value="UniProtKB-EC"/>
</dbReference>
<dbReference type="GO" id="GO:0046914">
    <property type="term" value="F:transition metal ion binding"/>
    <property type="evidence" value="ECO:0007669"/>
    <property type="project" value="InterPro"/>
</dbReference>
<dbReference type="Gene3D" id="2.30.30.50">
    <property type="match status" value="1"/>
</dbReference>
<dbReference type="Gene3D" id="1.10.472.20">
    <property type="entry name" value="Nitrile hydratase, beta subunit"/>
    <property type="match status" value="1"/>
</dbReference>
<dbReference type="InterPro" id="IPR049054">
    <property type="entry name" value="CN_hydtase_beta-like_N"/>
</dbReference>
<dbReference type="InterPro" id="IPR042262">
    <property type="entry name" value="CN_hydtase_beta_C"/>
</dbReference>
<dbReference type="InterPro" id="IPR024690">
    <property type="entry name" value="CN_hydtase_beta_dom_C"/>
</dbReference>
<dbReference type="InterPro" id="IPR008990">
    <property type="entry name" value="Elect_transpt_acc-like_dom_sf"/>
</dbReference>
<dbReference type="InterPro" id="IPR003168">
    <property type="entry name" value="Nitrile_hydratase_bsu"/>
</dbReference>
<dbReference type="NCBIfam" id="TIGR03888">
    <property type="entry name" value="nitrile_beta"/>
    <property type="match status" value="1"/>
</dbReference>
<dbReference type="Pfam" id="PF02211">
    <property type="entry name" value="NHase_beta_C"/>
    <property type="match status" value="1"/>
</dbReference>
<dbReference type="Pfam" id="PF21006">
    <property type="entry name" value="NHase_beta_N"/>
    <property type="match status" value="1"/>
</dbReference>
<dbReference type="PIRSF" id="PIRSF001427">
    <property type="entry name" value="NHase_beta"/>
    <property type="match status" value="1"/>
</dbReference>
<dbReference type="SUPFAM" id="SSF50090">
    <property type="entry name" value="Electron transport accessory proteins"/>
    <property type="match status" value="1"/>
</dbReference>
<accession>P13449</accession>
<accession>Q59789</accession>
<organism>
    <name type="scientific">Rhodococcus erythropolis</name>
    <name type="common">Arthrobacter picolinophilus</name>
    <dbReference type="NCBI Taxonomy" id="1833"/>
    <lineage>
        <taxon>Bacteria</taxon>
        <taxon>Bacillati</taxon>
        <taxon>Actinomycetota</taxon>
        <taxon>Actinomycetes</taxon>
        <taxon>Mycobacteriales</taxon>
        <taxon>Nocardiaceae</taxon>
        <taxon>Rhodococcus</taxon>
        <taxon>Rhodococcus erythropolis group</taxon>
    </lineage>
</organism>
<feature type="chain" id="PRO_0000186831" description="Nitrile hydratase subunit beta">
    <location>
        <begin position="1"/>
        <end position="212"/>
    </location>
</feature>
<feature type="sequence variant" description="In strain: ACV2.">
    <original>M</original>
    <variation>V</variation>
    <location>
        <position position="40"/>
    </location>
</feature>
<feature type="turn" evidence="2">
    <location>
        <begin position="31"/>
        <end position="34"/>
    </location>
</feature>
<feature type="helix" evidence="2">
    <location>
        <begin position="35"/>
        <end position="45"/>
    </location>
</feature>
<feature type="helix" evidence="2">
    <location>
        <begin position="52"/>
        <end position="60"/>
    </location>
</feature>
<feature type="helix" evidence="2">
    <location>
        <begin position="64"/>
        <end position="69"/>
    </location>
</feature>
<feature type="helix" evidence="2">
    <location>
        <begin position="72"/>
        <end position="86"/>
    </location>
</feature>
<feature type="helix" evidence="2">
    <location>
        <begin position="92"/>
        <end position="99"/>
    </location>
</feature>
<feature type="strand" evidence="2">
    <location>
        <begin position="128"/>
        <end position="131"/>
    </location>
</feature>
<feature type="helix" evidence="2">
    <location>
        <begin position="144"/>
        <end position="146"/>
    </location>
</feature>
<feature type="strand" evidence="2">
    <location>
        <begin position="150"/>
        <end position="156"/>
    </location>
</feature>
<feature type="helix" evidence="2">
    <location>
        <begin position="164"/>
        <end position="167"/>
    </location>
</feature>
<feature type="turn" evidence="2">
    <location>
        <begin position="168"/>
        <end position="170"/>
    </location>
</feature>
<feature type="strand" evidence="2">
    <location>
        <begin position="179"/>
        <end position="185"/>
    </location>
</feature>
<feature type="helix" evidence="2">
    <location>
        <begin position="186"/>
        <end position="190"/>
    </location>
</feature>
<feature type="strand" evidence="2">
    <location>
        <begin position="197"/>
        <end position="204"/>
    </location>
</feature>
<feature type="helix" evidence="2">
    <location>
        <begin position="205"/>
        <end position="207"/>
    </location>
</feature>
<feature type="strand" evidence="2">
    <location>
        <begin position="208"/>
        <end position="210"/>
    </location>
</feature>